<geneLocation type="mitochondrion"/>
<gene>
    <name evidence="1" type="primary">MT-ND3</name>
    <name type="synonym">MTND3</name>
    <name type="synonym">NADH3</name>
    <name type="synonym">ND3</name>
</gene>
<evidence type="ECO:0000250" key="1">
    <source>
        <dbReference type="UniProtKB" id="P03897"/>
    </source>
</evidence>
<evidence type="ECO:0000250" key="2">
    <source>
        <dbReference type="UniProtKB" id="P03898"/>
    </source>
</evidence>
<evidence type="ECO:0000255" key="3"/>
<evidence type="ECO:0000305" key="4"/>
<name>NU3M_PERMX</name>
<comment type="function">
    <text evidence="1">Core subunit of the mitochondrial membrane respiratory chain NADH dehydrogenase (Complex I) which catalyzes electron transfer from NADH through the respiratory chain, using ubiquinone as an electron acceptor. Essential for the catalytic activity of complex I.</text>
</comment>
<comment type="catalytic activity">
    <reaction evidence="1">
        <text>a ubiquinone + NADH + 5 H(+)(in) = a ubiquinol + NAD(+) + 4 H(+)(out)</text>
        <dbReference type="Rhea" id="RHEA:29091"/>
        <dbReference type="Rhea" id="RHEA-COMP:9565"/>
        <dbReference type="Rhea" id="RHEA-COMP:9566"/>
        <dbReference type="ChEBI" id="CHEBI:15378"/>
        <dbReference type="ChEBI" id="CHEBI:16389"/>
        <dbReference type="ChEBI" id="CHEBI:17976"/>
        <dbReference type="ChEBI" id="CHEBI:57540"/>
        <dbReference type="ChEBI" id="CHEBI:57945"/>
        <dbReference type="EC" id="7.1.1.2"/>
    </reaction>
</comment>
<comment type="subunit">
    <text evidence="1">Core subunit of respiratory chain NADH dehydrogenase (Complex I) which is composed of 45 different subunits. Interacts with TMEM186. Interacts with TMEM242 (By similarity).</text>
</comment>
<comment type="subcellular location">
    <subcellularLocation>
        <location evidence="2">Mitochondrion inner membrane</location>
        <topology evidence="3">Multi-pass membrane protein</topology>
    </subcellularLocation>
</comment>
<comment type="similarity">
    <text evidence="4">Belongs to the complex I subunit 3 family.</text>
</comment>
<accession>O21607</accession>
<feature type="chain" id="PRO_0000117798" description="NADH-ubiquinone oxidoreductase chain 3">
    <location>
        <begin position="1"/>
        <end position="115"/>
    </location>
</feature>
<feature type="transmembrane region" description="Helical" evidence="3">
    <location>
        <begin position="4"/>
        <end position="24"/>
    </location>
</feature>
<feature type="transmembrane region" description="Helical" evidence="3">
    <location>
        <begin position="55"/>
        <end position="75"/>
    </location>
</feature>
<feature type="transmembrane region" description="Helical" evidence="3">
    <location>
        <begin position="87"/>
        <end position="107"/>
    </location>
</feature>
<proteinExistence type="inferred from homology"/>
<reference key="1">
    <citation type="journal article" date="1998" name="Mol. Biol. Evol.">
        <title>Molecular systematics and paleobiogeography of the South American sigmodontine rodents.</title>
        <authorList>
            <person name="Engel S.R."/>
            <person name="Hogan K.M."/>
            <person name="Taylor J.F."/>
            <person name="Davis S.K."/>
        </authorList>
    </citation>
    <scope>NUCLEOTIDE SEQUENCE [GENOMIC DNA]</scope>
</reference>
<protein>
    <recommendedName>
        <fullName evidence="1">NADH-ubiquinone oxidoreductase chain 3</fullName>
        <ecNumber evidence="1">7.1.1.2</ecNumber>
    </recommendedName>
    <alternativeName>
        <fullName>NADH dehydrogenase subunit 3</fullName>
    </alternativeName>
</protein>
<organism>
    <name type="scientific">Peromyscus mexicanus</name>
    <name type="common">Mexican deer mouse</name>
    <dbReference type="NCBI Taxonomy" id="56317"/>
    <lineage>
        <taxon>Eukaryota</taxon>
        <taxon>Metazoa</taxon>
        <taxon>Chordata</taxon>
        <taxon>Craniata</taxon>
        <taxon>Vertebrata</taxon>
        <taxon>Euteleostomi</taxon>
        <taxon>Mammalia</taxon>
        <taxon>Eutheria</taxon>
        <taxon>Euarchontoglires</taxon>
        <taxon>Glires</taxon>
        <taxon>Rodentia</taxon>
        <taxon>Myomorpha</taxon>
        <taxon>Muroidea</taxon>
        <taxon>Cricetidae</taxon>
        <taxon>Neotominae</taxon>
        <taxon>Peromyscus</taxon>
    </lineage>
</organism>
<keyword id="KW-0249">Electron transport</keyword>
<keyword id="KW-0472">Membrane</keyword>
<keyword id="KW-0496">Mitochondrion</keyword>
<keyword id="KW-0999">Mitochondrion inner membrane</keyword>
<keyword id="KW-0520">NAD</keyword>
<keyword id="KW-0679">Respiratory chain</keyword>
<keyword id="KW-1278">Translocase</keyword>
<keyword id="KW-0812">Transmembrane</keyword>
<keyword id="KW-1133">Transmembrane helix</keyword>
<keyword id="KW-0813">Transport</keyword>
<keyword id="KW-0830">Ubiquinone</keyword>
<dbReference type="EC" id="7.1.1.2" evidence="1"/>
<dbReference type="EMBL" id="U83862">
    <property type="protein sequence ID" value="AAB87268.1"/>
    <property type="molecule type" value="Genomic_DNA"/>
</dbReference>
<dbReference type="SMR" id="O21607"/>
<dbReference type="GO" id="GO:0005743">
    <property type="term" value="C:mitochondrial inner membrane"/>
    <property type="evidence" value="ECO:0000250"/>
    <property type="project" value="UniProtKB"/>
</dbReference>
<dbReference type="GO" id="GO:0030964">
    <property type="term" value="C:NADH dehydrogenase complex"/>
    <property type="evidence" value="ECO:0007669"/>
    <property type="project" value="TreeGrafter"/>
</dbReference>
<dbReference type="GO" id="GO:0008137">
    <property type="term" value="F:NADH dehydrogenase (ubiquinone) activity"/>
    <property type="evidence" value="ECO:0000250"/>
    <property type="project" value="UniProtKB"/>
</dbReference>
<dbReference type="GO" id="GO:0006120">
    <property type="term" value="P:mitochondrial electron transport, NADH to ubiquinone"/>
    <property type="evidence" value="ECO:0000250"/>
    <property type="project" value="UniProtKB"/>
</dbReference>
<dbReference type="FunFam" id="1.20.58.1610:FF:000004">
    <property type="entry name" value="NADH-quinone oxidoreductase subunit A"/>
    <property type="match status" value="1"/>
</dbReference>
<dbReference type="Gene3D" id="1.20.58.1610">
    <property type="entry name" value="NADH:ubiquinone/plastoquinone oxidoreductase, chain 3"/>
    <property type="match status" value="1"/>
</dbReference>
<dbReference type="InterPro" id="IPR000440">
    <property type="entry name" value="NADH_UbQ/plastoQ_OxRdtase_su3"/>
</dbReference>
<dbReference type="InterPro" id="IPR038430">
    <property type="entry name" value="NDAH_ubi_oxred_su3_sf"/>
</dbReference>
<dbReference type="PANTHER" id="PTHR11058">
    <property type="entry name" value="NADH-UBIQUINONE OXIDOREDUCTASE CHAIN 3"/>
    <property type="match status" value="1"/>
</dbReference>
<dbReference type="PANTHER" id="PTHR11058:SF9">
    <property type="entry name" value="NADH-UBIQUINONE OXIDOREDUCTASE CHAIN 3"/>
    <property type="match status" value="1"/>
</dbReference>
<dbReference type="Pfam" id="PF00507">
    <property type="entry name" value="Oxidored_q4"/>
    <property type="match status" value="1"/>
</dbReference>
<sequence length="115" mass="13304">MNMLMVMLVNITLSSCLIMIAFWLPQLNLYTEKANPYECGFDPMSSARLPFSMKFFLVAITFFLFDLEIALLLPLPWAIQMYNINTMMLTAFILVSVLALGLAYEWMQKGLEWTE</sequence>